<comment type="function">
    <text evidence="3">Isomerase involved in the biosynthesis of glabretanes triterpene natural products such as glabretal, a component with in vitro antiproliferative properties on lymphocytes (PubMed:36821810). Catalyzes the conversion of 7,8-epoxymelianol to protoglabretal via skeletal rearrangements (PubMed:36821810).</text>
</comment>
<comment type="catalytic activity">
    <reaction evidence="3">
        <text>7,8-epoxymelianol = protoglabretal</text>
        <dbReference type="Rhea" id="RHEA:80299"/>
        <dbReference type="ChEBI" id="CHEBI:231452"/>
        <dbReference type="ChEBI" id="CHEBI:231454"/>
    </reaction>
    <physiologicalReaction direction="left-to-right" evidence="3">
        <dbReference type="Rhea" id="RHEA:80300"/>
    </physiologicalReaction>
</comment>
<comment type="pathway">
    <text evidence="3">Secondary metabolite biosynthesis; terpenoid biosynthesis.</text>
</comment>
<comment type="subcellular location">
    <subcellularLocation>
        <location evidence="1">Membrane</location>
        <topology evidence="1">Multi-pass membrane protein</topology>
    </subcellularLocation>
</comment>
<comment type="similarity">
    <text evidence="5">Belongs to the EBP family.</text>
</comment>
<reference key="1">
    <citation type="journal article" date="2023" name="J. Am. Chem. Soc.">
        <title>Post-cyclization skeletal rearrangements in plant triterpenoid biosynthesis by a pair of branchpoint isomerases.</title>
        <authorList>
            <person name="Chuang L."/>
            <person name="Liu S."/>
            <person name="Franke J."/>
        </authorList>
    </citation>
    <scope>NUCLEOTIDE SEQUENCE [MRNA]</scope>
    <scope>FUNCTION</scope>
    <scope>CATALYTIC ACTIVITY</scope>
    <scope>PATHWAY</scope>
</reference>
<gene>
    <name evidence="4" type="primary">ISM2</name>
</gene>
<sequence>MSNHPYSPRDLILPDFTPNLRSVSDVHAWNGAATFLVMYGIWVLAGRSSLKLSKTDKWLMIWWAVSGLIHIIHEGYWLFSPEFYKDKSGNYFAEVWKEYCKGDSRYASRHSAVVGIEGIAVIIVGPASLFAVYAIAKGKSYSYILQLALALVQFYGSTLYFITAFLEGDNFAMDRDHYYKYFIAQGGTWLLFPALIIIRCWKKISAACEFQDQKKAKFY</sequence>
<feature type="chain" id="PRO_0000461377" description="Protoglabretal synthase ISM2">
    <location>
        <begin position="1"/>
        <end position="219"/>
    </location>
</feature>
<feature type="transmembrane region" description="Helical" evidence="1">
    <location>
        <begin position="26"/>
        <end position="46"/>
    </location>
</feature>
<feature type="transmembrane region" description="Helical" evidence="1">
    <location>
        <begin position="59"/>
        <end position="79"/>
    </location>
</feature>
<feature type="transmembrane region" description="Helical" evidence="1">
    <location>
        <begin position="112"/>
        <end position="132"/>
    </location>
</feature>
<feature type="transmembrane region" description="Helical" evidence="1">
    <location>
        <begin position="144"/>
        <end position="164"/>
    </location>
</feature>
<feature type="transmembrane region" description="Helical" evidence="1">
    <location>
        <begin position="178"/>
        <end position="198"/>
    </location>
</feature>
<feature type="domain" description="EXPERA" evidence="2">
    <location>
        <begin position="55"/>
        <end position="197"/>
    </location>
</feature>
<name>ISM2_AILAL</name>
<protein>
    <recommendedName>
        <fullName evidence="4">Protoglabretal synthase ISM2</fullName>
        <ecNumber evidence="3">5.3.3.-</ecNumber>
    </recommendedName>
    <alternativeName>
        <fullName evidence="4">Isomerase 2</fullName>
        <shortName evidence="4">AaISM2</shortName>
    </alternativeName>
</protein>
<accession>A0A9Y1LQX3</accession>
<evidence type="ECO:0000255" key="1"/>
<evidence type="ECO:0000255" key="2">
    <source>
        <dbReference type="PROSITE-ProRule" id="PRU01087"/>
    </source>
</evidence>
<evidence type="ECO:0000269" key="3">
    <source>
    </source>
</evidence>
<evidence type="ECO:0000303" key="4">
    <source>
    </source>
</evidence>
<evidence type="ECO:0000305" key="5"/>
<organism>
    <name type="scientific">Ailanthus altissima</name>
    <name type="common">Tree-of-heaven</name>
    <name type="synonym">Toxicodendron altissimum</name>
    <dbReference type="NCBI Taxonomy" id="2768810"/>
    <lineage>
        <taxon>Eukaryota</taxon>
        <taxon>Viridiplantae</taxon>
        <taxon>Streptophyta</taxon>
        <taxon>Embryophyta</taxon>
        <taxon>Tracheophyta</taxon>
        <taxon>Spermatophyta</taxon>
        <taxon>Magnoliopsida</taxon>
        <taxon>eudicotyledons</taxon>
        <taxon>Gunneridae</taxon>
        <taxon>Pentapetalae</taxon>
        <taxon>rosids</taxon>
        <taxon>malvids</taxon>
        <taxon>Sapindales</taxon>
        <taxon>Simaroubaceae</taxon>
        <taxon>Ailanthus</taxon>
    </lineage>
</organism>
<keyword id="KW-0413">Isomerase</keyword>
<keyword id="KW-0444">Lipid biosynthesis</keyword>
<keyword id="KW-0443">Lipid metabolism</keyword>
<keyword id="KW-0472">Membrane</keyword>
<keyword id="KW-0752">Steroid biosynthesis</keyword>
<keyword id="KW-0753">Steroid metabolism</keyword>
<keyword id="KW-0756">Sterol biosynthesis</keyword>
<keyword id="KW-1207">Sterol metabolism</keyword>
<keyword id="KW-0812">Transmembrane</keyword>
<keyword id="KW-1133">Transmembrane helix</keyword>
<proteinExistence type="evidence at protein level"/>
<dbReference type="EC" id="5.3.3.-" evidence="3"/>
<dbReference type="EMBL" id="ON942229">
    <property type="protein sequence ID" value="WET51928.1"/>
    <property type="molecule type" value="mRNA"/>
</dbReference>
<dbReference type="SMR" id="A0A9Y1LQX3"/>
<dbReference type="UniPathway" id="UPA00213"/>
<dbReference type="GO" id="GO:0005783">
    <property type="term" value="C:endoplasmic reticulum"/>
    <property type="evidence" value="ECO:0007669"/>
    <property type="project" value="TreeGrafter"/>
</dbReference>
<dbReference type="GO" id="GO:0016020">
    <property type="term" value="C:membrane"/>
    <property type="evidence" value="ECO:0007669"/>
    <property type="project" value="UniProtKB-SubCell"/>
</dbReference>
<dbReference type="GO" id="GO:0000247">
    <property type="term" value="F:C-8 sterol isomerase activity"/>
    <property type="evidence" value="ECO:0007669"/>
    <property type="project" value="TreeGrafter"/>
</dbReference>
<dbReference type="GO" id="GO:0047750">
    <property type="term" value="F:cholestenol delta-isomerase activity"/>
    <property type="evidence" value="ECO:0007669"/>
    <property type="project" value="InterPro"/>
</dbReference>
<dbReference type="GO" id="GO:0004769">
    <property type="term" value="F:steroid Delta-isomerase activity"/>
    <property type="evidence" value="ECO:0007669"/>
    <property type="project" value="TreeGrafter"/>
</dbReference>
<dbReference type="GO" id="GO:0016126">
    <property type="term" value="P:sterol biosynthetic process"/>
    <property type="evidence" value="ECO:0007669"/>
    <property type="project" value="UniProtKB-KW"/>
</dbReference>
<dbReference type="InterPro" id="IPR007905">
    <property type="entry name" value="EBP"/>
</dbReference>
<dbReference type="InterPro" id="IPR033118">
    <property type="entry name" value="EXPERA"/>
</dbReference>
<dbReference type="PANTHER" id="PTHR14207:SF0">
    <property type="entry name" value="3-BETA-HYDROXYSTEROID-DELTA(8),DELTA(7)-ISOMERASE"/>
    <property type="match status" value="1"/>
</dbReference>
<dbReference type="PANTHER" id="PTHR14207">
    <property type="entry name" value="STEROL ISOMERASE"/>
    <property type="match status" value="1"/>
</dbReference>
<dbReference type="Pfam" id="PF05241">
    <property type="entry name" value="EBP"/>
    <property type="match status" value="1"/>
</dbReference>
<dbReference type="PROSITE" id="PS51751">
    <property type="entry name" value="EXPERA"/>
    <property type="match status" value="1"/>
</dbReference>